<feature type="chain" id="PRO_0000284666" description="HORMA domain-containing protein 1">
    <location>
        <begin position="1"/>
        <end position="392"/>
    </location>
</feature>
<feature type="domain" description="HORMA" evidence="1">
    <location>
        <begin position="25"/>
        <end position="227"/>
    </location>
</feature>
<feature type="region of interest" description="Disordered" evidence="2">
    <location>
        <begin position="323"/>
        <end position="359"/>
    </location>
</feature>
<feature type="short sequence motif" description="Nuclear localization signal" evidence="16">
    <location>
        <begin position="381"/>
        <end position="384"/>
    </location>
</feature>
<feature type="compositionally biased region" description="Polar residues" evidence="2">
    <location>
        <begin position="341"/>
        <end position="353"/>
    </location>
</feature>
<feature type="modified residue" description="Phosphoserine" evidence="8 18">
    <location>
        <position position="375"/>
    </location>
</feature>
<feature type="splice variant" id="VSP_024604" description="In isoform 2." evidence="13 14 15">
    <original>VLHVLESSQESVLKKRRVSEPKEHT</original>
    <variation>INAPECR</variation>
    <location>
        <begin position="368"/>
        <end position="392"/>
    </location>
</feature>
<feature type="sequence conflict" description="In Ref. 2; BAB30195." evidence="16" ref="2">
    <original>S</original>
    <variation>Y</variation>
    <location>
        <position position="140"/>
    </location>
</feature>
<proteinExistence type="evidence at protein level"/>
<gene>
    <name evidence="17" type="primary">Hormad1</name>
    <name evidence="14" type="synonym">Nohma</name>
</gene>
<keyword id="KW-0025">Alternative splicing</keyword>
<keyword id="KW-0158">Chromosome</keyword>
<keyword id="KW-0963">Cytoplasm</keyword>
<keyword id="KW-0221">Differentiation</keyword>
<keyword id="KW-0469">Meiosis</keyword>
<keyword id="KW-0539">Nucleus</keyword>
<keyword id="KW-0896">Oogenesis</keyword>
<keyword id="KW-0597">Phosphoprotein</keyword>
<keyword id="KW-1185">Reference proteome</keyword>
<keyword id="KW-0744">Spermatogenesis</keyword>
<name>HORM1_MOUSE</name>
<evidence type="ECO:0000255" key="1">
    <source>
        <dbReference type="PROSITE-ProRule" id="PRU00109"/>
    </source>
</evidence>
<evidence type="ECO:0000256" key="2">
    <source>
        <dbReference type="SAM" id="MobiDB-lite"/>
    </source>
</evidence>
<evidence type="ECO:0000269" key="3">
    <source>
    </source>
</evidence>
<evidence type="ECO:0000269" key="4">
    <source>
    </source>
</evidence>
<evidence type="ECO:0000269" key="5">
    <source>
    </source>
</evidence>
<evidence type="ECO:0000269" key="6">
    <source>
    </source>
</evidence>
<evidence type="ECO:0000269" key="7">
    <source>
    </source>
</evidence>
<evidence type="ECO:0000269" key="8">
    <source>
    </source>
</evidence>
<evidence type="ECO:0000269" key="9">
    <source>
    </source>
</evidence>
<evidence type="ECO:0000269" key="10">
    <source>
    </source>
</evidence>
<evidence type="ECO:0000269" key="11">
    <source>
    </source>
</evidence>
<evidence type="ECO:0000269" key="12">
    <source>
    </source>
</evidence>
<evidence type="ECO:0000303" key="13">
    <source>
    </source>
</evidence>
<evidence type="ECO:0000303" key="14">
    <source>
    </source>
</evidence>
<evidence type="ECO:0000303" key="15">
    <source>
    </source>
</evidence>
<evidence type="ECO:0000305" key="16"/>
<evidence type="ECO:0000312" key="17">
    <source>
        <dbReference type="MGI" id="MGI:1915231"/>
    </source>
</evidence>
<evidence type="ECO:0007744" key="18">
    <source>
    </source>
</evidence>
<protein>
    <recommendedName>
        <fullName evidence="17">HORMA domain-containing protein 1</fullName>
    </recommendedName>
    <alternativeName>
        <fullName evidence="14">Newborn ovary HORMA protein</fullName>
    </alternativeName>
</protein>
<reference key="1">
    <citation type="journal article" date="2004" name="Gene Expr. Patterns">
        <title>Restricted germ cell expression of a gene encoding a novel mammalian HORMA domain-containing protein.</title>
        <authorList>
            <person name="Pangas S.A."/>
            <person name="Yan W."/>
            <person name="Matzuk M.M."/>
            <person name="Rajkovic A."/>
        </authorList>
    </citation>
    <scope>NUCLEOTIDE SEQUENCE [MRNA] (ISOFORMS 1 AND 2)</scope>
    <scope>TISSUE SPECIFICITY</scope>
    <scope>DEVELOPMENTAL STAGE</scope>
    <source>
        <strain>129/SvEv</strain>
        <tissue>Ovary</tissue>
    </source>
</reference>
<reference key="2">
    <citation type="journal article" date="2005" name="Science">
        <title>The transcriptional landscape of the mammalian genome.</title>
        <authorList>
            <person name="Carninci P."/>
            <person name="Kasukawa T."/>
            <person name="Katayama S."/>
            <person name="Gough J."/>
            <person name="Frith M.C."/>
            <person name="Maeda N."/>
            <person name="Oyama R."/>
            <person name="Ravasi T."/>
            <person name="Lenhard B."/>
            <person name="Wells C."/>
            <person name="Kodzius R."/>
            <person name="Shimokawa K."/>
            <person name="Bajic V.B."/>
            <person name="Brenner S.E."/>
            <person name="Batalov S."/>
            <person name="Forrest A.R."/>
            <person name="Zavolan M."/>
            <person name="Davis M.J."/>
            <person name="Wilming L.G."/>
            <person name="Aidinis V."/>
            <person name="Allen J.E."/>
            <person name="Ambesi-Impiombato A."/>
            <person name="Apweiler R."/>
            <person name="Aturaliya R.N."/>
            <person name="Bailey T.L."/>
            <person name="Bansal M."/>
            <person name="Baxter L."/>
            <person name="Beisel K.W."/>
            <person name="Bersano T."/>
            <person name="Bono H."/>
            <person name="Chalk A.M."/>
            <person name="Chiu K.P."/>
            <person name="Choudhary V."/>
            <person name="Christoffels A."/>
            <person name="Clutterbuck D.R."/>
            <person name="Crowe M.L."/>
            <person name="Dalla E."/>
            <person name="Dalrymple B.P."/>
            <person name="de Bono B."/>
            <person name="Della Gatta G."/>
            <person name="di Bernardo D."/>
            <person name="Down T."/>
            <person name="Engstrom P."/>
            <person name="Fagiolini M."/>
            <person name="Faulkner G."/>
            <person name="Fletcher C.F."/>
            <person name="Fukushima T."/>
            <person name="Furuno M."/>
            <person name="Futaki S."/>
            <person name="Gariboldi M."/>
            <person name="Georgii-Hemming P."/>
            <person name="Gingeras T.R."/>
            <person name="Gojobori T."/>
            <person name="Green R.E."/>
            <person name="Gustincich S."/>
            <person name="Harbers M."/>
            <person name="Hayashi Y."/>
            <person name="Hensch T.K."/>
            <person name="Hirokawa N."/>
            <person name="Hill D."/>
            <person name="Huminiecki L."/>
            <person name="Iacono M."/>
            <person name="Ikeo K."/>
            <person name="Iwama A."/>
            <person name="Ishikawa T."/>
            <person name="Jakt M."/>
            <person name="Kanapin A."/>
            <person name="Katoh M."/>
            <person name="Kawasawa Y."/>
            <person name="Kelso J."/>
            <person name="Kitamura H."/>
            <person name="Kitano H."/>
            <person name="Kollias G."/>
            <person name="Krishnan S.P."/>
            <person name="Kruger A."/>
            <person name="Kummerfeld S.K."/>
            <person name="Kurochkin I.V."/>
            <person name="Lareau L.F."/>
            <person name="Lazarevic D."/>
            <person name="Lipovich L."/>
            <person name="Liu J."/>
            <person name="Liuni S."/>
            <person name="McWilliam S."/>
            <person name="Madan Babu M."/>
            <person name="Madera M."/>
            <person name="Marchionni L."/>
            <person name="Matsuda H."/>
            <person name="Matsuzawa S."/>
            <person name="Miki H."/>
            <person name="Mignone F."/>
            <person name="Miyake S."/>
            <person name="Morris K."/>
            <person name="Mottagui-Tabar S."/>
            <person name="Mulder N."/>
            <person name="Nakano N."/>
            <person name="Nakauchi H."/>
            <person name="Ng P."/>
            <person name="Nilsson R."/>
            <person name="Nishiguchi S."/>
            <person name="Nishikawa S."/>
            <person name="Nori F."/>
            <person name="Ohara O."/>
            <person name="Okazaki Y."/>
            <person name="Orlando V."/>
            <person name="Pang K.C."/>
            <person name="Pavan W.J."/>
            <person name="Pavesi G."/>
            <person name="Pesole G."/>
            <person name="Petrovsky N."/>
            <person name="Piazza S."/>
            <person name="Reed J."/>
            <person name="Reid J.F."/>
            <person name="Ring B.Z."/>
            <person name="Ringwald M."/>
            <person name="Rost B."/>
            <person name="Ruan Y."/>
            <person name="Salzberg S.L."/>
            <person name="Sandelin A."/>
            <person name="Schneider C."/>
            <person name="Schoenbach C."/>
            <person name="Sekiguchi K."/>
            <person name="Semple C.A."/>
            <person name="Seno S."/>
            <person name="Sessa L."/>
            <person name="Sheng Y."/>
            <person name="Shibata Y."/>
            <person name="Shimada H."/>
            <person name="Shimada K."/>
            <person name="Silva D."/>
            <person name="Sinclair B."/>
            <person name="Sperling S."/>
            <person name="Stupka E."/>
            <person name="Sugiura K."/>
            <person name="Sultana R."/>
            <person name="Takenaka Y."/>
            <person name="Taki K."/>
            <person name="Tammoja K."/>
            <person name="Tan S.L."/>
            <person name="Tang S."/>
            <person name="Taylor M.S."/>
            <person name="Tegner J."/>
            <person name="Teichmann S.A."/>
            <person name="Ueda H.R."/>
            <person name="van Nimwegen E."/>
            <person name="Verardo R."/>
            <person name="Wei C.L."/>
            <person name="Yagi K."/>
            <person name="Yamanishi H."/>
            <person name="Zabarovsky E."/>
            <person name="Zhu S."/>
            <person name="Zimmer A."/>
            <person name="Hide W."/>
            <person name="Bult C."/>
            <person name="Grimmond S.M."/>
            <person name="Teasdale R.D."/>
            <person name="Liu E.T."/>
            <person name="Brusic V."/>
            <person name="Quackenbush J."/>
            <person name="Wahlestedt C."/>
            <person name="Mattick J.S."/>
            <person name="Hume D.A."/>
            <person name="Kai C."/>
            <person name="Sasaki D."/>
            <person name="Tomaru Y."/>
            <person name="Fukuda S."/>
            <person name="Kanamori-Katayama M."/>
            <person name="Suzuki M."/>
            <person name="Aoki J."/>
            <person name="Arakawa T."/>
            <person name="Iida J."/>
            <person name="Imamura K."/>
            <person name="Itoh M."/>
            <person name="Kato T."/>
            <person name="Kawaji H."/>
            <person name="Kawagashira N."/>
            <person name="Kawashima T."/>
            <person name="Kojima M."/>
            <person name="Kondo S."/>
            <person name="Konno H."/>
            <person name="Nakano K."/>
            <person name="Ninomiya N."/>
            <person name="Nishio T."/>
            <person name="Okada M."/>
            <person name="Plessy C."/>
            <person name="Shibata K."/>
            <person name="Shiraki T."/>
            <person name="Suzuki S."/>
            <person name="Tagami M."/>
            <person name="Waki K."/>
            <person name="Watahiki A."/>
            <person name="Okamura-Oho Y."/>
            <person name="Suzuki H."/>
            <person name="Kawai J."/>
            <person name="Hayashizaki Y."/>
        </authorList>
    </citation>
    <scope>NUCLEOTIDE SEQUENCE [LARGE SCALE MRNA] (ISOFORMS 1 AND 2)</scope>
    <source>
        <strain>C57BL/6J</strain>
        <tissue>Testis</tissue>
    </source>
</reference>
<reference key="3">
    <citation type="journal article" date="2004" name="Genome Res.">
        <title>The status, quality, and expansion of the NIH full-length cDNA project: the Mammalian Gene Collection (MGC).</title>
        <authorList>
            <consortium name="The MGC Project Team"/>
        </authorList>
    </citation>
    <scope>NUCLEOTIDE SEQUENCE [LARGE SCALE MRNA] (ISOFORMS 1 AND 2)</scope>
    <source>
        <tissue>Testis</tissue>
    </source>
</reference>
<reference key="4">
    <citation type="journal article" date="2005" name="Cancer Immun.">
        <title>Identification of CT46/HORMAD1, an immunogenic cancer/testis antigen encoding a putative meiosis-related protein.</title>
        <authorList>
            <person name="Chen Y.-T."/>
            <person name="Venditti C.A."/>
            <person name="Theiler G."/>
            <person name="Stevenson B.J."/>
            <person name="Iseli C."/>
            <person name="Gure A.O."/>
            <person name="Jongeneel C.V."/>
            <person name="Old L.J."/>
            <person name="Simpson A.J.G."/>
        </authorList>
    </citation>
    <scope>IDENTIFICATION (ISOFORM 2)</scope>
</reference>
<reference key="5">
    <citation type="journal article" date="2009" name="PLoS Genet.">
        <title>Mouse HORMAD1 and HORMAD2, two conserved meiotic chromosomal proteins, are depleted from synapsed chromosome axes with the help of TRIP13 AAA-ATPase.</title>
        <authorList>
            <person name="Wojtasz L."/>
            <person name="Daniel K."/>
            <person name="Roig I."/>
            <person name="Bolcun-Filas E."/>
            <person name="Xu H."/>
            <person name="Boonsanay V."/>
            <person name="Eckmann C.R."/>
            <person name="Cooke H.J."/>
            <person name="Jasin M."/>
            <person name="Keeney S."/>
            <person name="McKay M.J."/>
            <person name="Toth A."/>
        </authorList>
    </citation>
    <scope>SUBCELLULAR LOCATION</scope>
    <scope>TISSUE SPECIFICITY</scope>
</reference>
<reference key="6">
    <citation type="journal article" date="2010" name="Cell">
        <title>A tissue-specific atlas of mouse protein phosphorylation and expression.</title>
        <authorList>
            <person name="Huttlin E.L."/>
            <person name="Jedrychowski M.P."/>
            <person name="Elias J.E."/>
            <person name="Goswami T."/>
            <person name="Rad R."/>
            <person name="Beausoleil S.A."/>
            <person name="Villen J."/>
            <person name="Haas W."/>
            <person name="Sowa M.E."/>
            <person name="Gygi S.P."/>
        </authorList>
    </citation>
    <scope>PHOSPHORYLATION [LARGE SCALE ANALYSIS] AT SER-375</scope>
    <scope>IDENTIFICATION BY MASS SPECTROMETRY [LARGE SCALE ANALYSIS]</scope>
    <source>
        <tissue>Testis</tissue>
    </source>
</reference>
<reference key="7">
    <citation type="journal article" date="2010" name="Exp. Cell Res.">
        <title>A novel mammalian HORMA domain-containing protein, HORMAD1, preferentially associates with unsynapsed meiotic chromosomes.</title>
        <authorList>
            <person name="Fukuda T."/>
            <person name="Daniel K."/>
            <person name="Wojtasz L."/>
            <person name="Toth A."/>
            <person name="Hoog C."/>
        </authorList>
    </citation>
    <scope>FUNCTION</scope>
    <scope>ALTERNATIVE SPLICING (ISOFORM 2)</scope>
    <scope>SUBCELLULAR LOCATION</scope>
    <scope>TISSUE SPECIFICITY</scope>
    <scope>PHOSPHORYLATION</scope>
    <scope>DEVELOPMENTAL STAGE</scope>
</reference>
<reference key="8">
    <citation type="journal article" date="2010" name="PLoS Genet.">
        <title>Hormad1 mutation disrupts synaptonemal complex formation, recombination, and chromosome segregation in mammalian meiosis.</title>
        <authorList>
            <person name="Shin Y.H."/>
            <person name="Choi Y."/>
            <person name="Erdin S.U."/>
            <person name="Yatsenko S.A."/>
            <person name="Kloc M."/>
            <person name="Yang F."/>
            <person name="Wang P.J."/>
            <person name="Meistrich M.L."/>
            <person name="Rajkovic A."/>
        </authorList>
    </citation>
    <scope>FUNCTION</scope>
    <scope>DISRUPTION PHENOTYPE</scope>
    <scope>TISSUE SPECIFICITY</scope>
    <scope>DEVELOPMENTAL STAGE</scope>
</reference>
<reference key="9">
    <citation type="journal article" date="2011" name="Nat. Cell Biol.">
        <title>Meiotic homologue alignment and its quality surveillance are controlled by mouse HORMAD1.</title>
        <authorList>
            <person name="Daniel K."/>
            <person name="Lange J."/>
            <person name="Hached K."/>
            <person name="Fu J."/>
            <person name="Anastassiadis K."/>
            <person name="Roig I."/>
            <person name="Cooke H.J."/>
            <person name="Stewart A.F."/>
            <person name="Wassmann K."/>
            <person name="Jasin M."/>
            <person name="Keeney S."/>
            <person name="Toth A."/>
        </authorList>
    </citation>
    <scope>FUNCTION</scope>
    <scope>DISRUPTION PHENOTYPE</scope>
</reference>
<reference key="10">
    <citation type="journal article" date="2012" name="Genes Dev.">
        <title>Meiotic DNA double-strand breaks and chromosome asynapsis in mice are monitored by distinct HORMAD2-independent and -dependent mechanisms.</title>
        <authorList>
            <person name="Wojtasz L."/>
            <person name="Cloutier J.M."/>
            <person name="Baumann M."/>
            <person name="Daniel K."/>
            <person name="Varga J."/>
            <person name="Fu J."/>
            <person name="Anastassiadis K."/>
            <person name="Stewart A.F."/>
            <person name="Remenyi A."/>
            <person name="Turner J.M."/>
            <person name="Toth A."/>
        </authorList>
    </citation>
    <scope>SUBCELLULAR LOCATION</scope>
    <scope>INTERACTION WITH HORMAD2</scope>
</reference>
<reference key="11">
    <citation type="journal article" date="2012" name="PLoS Genet.">
        <title>Phosphorylation of chromosome core components may serve as axis marks for the status of chromosomal events during mammalian meiosis.</title>
        <authorList>
            <person name="Fukuda T."/>
            <person name="Pratto F."/>
            <person name="Schimenti J.C."/>
            <person name="Turner J.M."/>
            <person name="Camerini-Otero R.D."/>
            <person name="Hoeoeg C."/>
        </authorList>
    </citation>
    <scope>SUBCELLULAR LOCATION</scope>
    <scope>PHOSPHORYLATION AT SER-375</scope>
</reference>
<reference key="12">
    <citation type="journal article" date="2016" name="Nat. Cell Biol.">
        <title>Meiotic DNA break formation requires the unsynapsed chromosome axis-binding protein IHO1 (CCDC36) in mice.</title>
        <authorList>
            <person name="Stanzione M."/>
            <person name="Baumann M."/>
            <person name="Papanikos F."/>
            <person name="Dereli I."/>
            <person name="Lange J."/>
            <person name="Ramlal A."/>
            <person name="Traenkner D."/>
            <person name="Shibuya H."/>
            <person name="de Massy B."/>
            <person name="Watanabe Y."/>
            <person name="Jasin M."/>
            <person name="Keeney S."/>
            <person name="Toth A."/>
        </authorList>
    </citation>
    <scope>SUBCELLULAR LOCATION</scope>
    <scope>INTERACTION WITH IHO1</scope>
</reference>
<reference key="13">
    <citation type="journal article" date="2018" name="Commun. Biol.">
        <title>Evolutionarily-conserved MZIP2 is essential for crossover formation in mammalian meiosis.</title>
        <authorList>
            <person name="Zhang Q."/>
            <person name="Shao J."/>
            <person name="Fan H.Y."/>
            <person name="Yu C."/>
        </authorList>
    </citation>
    <scope>SUBCELLULAR LOCATION</scope>
</reference>
<reference key="14">
    <citation type="journal article" date="2019" name="Sci. Adv.">
        <title>SPO16 binds SHOC1 to promote homologous recombination and crossing-over in meiotic prophase I.</title>
        <authorList>
            <person name="Zhang Q."/>
            <person name="Ji S.Y."/>
            <person name="Busayavalasa K."/>
            <person name="Yu C."/>
        </authorList>
    </citation>
    <scope>SUBCELLULAR LOCATION</scope>
</reference>
<sequence>MATMQLQRTASLSALVFPNKISTEHQSLMFVKRLLAVSVSCITYLRGIFPERAYGTRYLDDLCVKILKEDKNCPGSSQLVKWMLGCYDALQKKYLRMIILAVYTNPGDPQTISECYQFKFKYTKNGPIMDFISKNQNNKSSTTSADTKKASILLIRKIYVLMQNLGPLPNDVCLTMKLFYYDEVTPPDYQPPGFKDGDCEGVIFDGDPTYLNVGEVPTPFHTFRLKVTTEKERMENIDSTILKPKESKTQFEKILMDKDDVEDENHNNFDIKTKMNEQNENSGASEIKEPNLDCKEEETMQFKKSQSPSISHCQVEQLVSKTSELDVSESKTRSGKIFQSKMVNGNNQQGQTSKENRKRSLRQFRKTVLHVLESSQESVLKKRRVSEPKEHT</sequence>
<organism>
    <name type="scientific">Mus musculus</name>
    <name type="common">Mouse</name>
    <dbReference type="NCBI Taxonomy" id="10090"/>
    <lineage>
        <taxon>Eukaryota</taxon>
        <taxon>Metazoa</taxon>
        <taxon>Chordata</taxon>
        <taxon>Craniata</taxon>
        <taxon>Vertebrata</taxon>
        <taxon>Euteleostomi</taxon>
        <taxon>Mammalia</taxon>
        <taxon>Eutheria</taxon>
        <taxon>Euarchontoglires</taxon>
        <taxon>Glires</taxon>
        <taxon>Rodentia</taxon>
        <taxon>Myomorpha</taxon>
        <taxon>Muroidea</taxon>
        <taxon>Muridae</taxon>
        <taxon>Murinae</taxon>
        <taxon>Mus</taxon>
        <taxon>Mus</taxon>
    </lineage>
</organism>
<dbReference type="EMBL" id="AY626343">
    <property type="protein sequence ID" value="AAT45739.1"/>
    <property type="molecule type" value="mRNA"/>
</dbReference>
<dbReference type="EMBL" id="AY634284">
    <property type="protein sequence ID" value="AAT47126.1"/>
    <property type="molecule type" value="mRNA"/>
</dbReference>
<dbReference type="EMBL" id="AK014945">
    <property type="protein sequence ID" value="BAB29633.1"/>
    <property type="molecule type" value="mRNA"/>
</dbReference>
<dbReference type="EMBL" id="AK016324">
    <property type="protein sequence ID" value="BAB30195.1"/>
    <property type="molecule type" value="mRNA"/>
</dbReference>
<dbReference type="EMBL" id="AK016743">
    <property type="protein sequence ID" value="BAB30406.1"/>
    <property type="molecule type" value="mRNA"/>
</dbReference>
<dbReference type="EMBL" id="AK163995">
    <property type="protein sequence ID" value="BAE37577.1"/>
    <property type="molecule type" value="mRNA"/>
</dbReference>
<dbReference type="EMBL" id="BC051129">
    <property type="protein sequence ID" value="AAH51129.1"/>
    <property type="molecule type" value="mRNA"/>
</dbReference>
<dbReference type="CCDS" id="CCDS38547.1">
    <molecule id="Q9D5T7-2"/>
</dbReference>
<dbReference type="CCDS" id="CCDS71292.1">
    <molecule id="Q9D5T7-1"/>
</dbReference>
<dbReference type="RefSeq" id="NP_001276461.1">
    <molecule id="Q9D5T7-1"/>
    <property type="nucleotide sequence ID" value="NM_001289532.1"/>
</dbReference>
<dbReference type="RefSeq" id="NP_001276463.1">
    <molecule id="Q9D5T7-2"/>
    <property type="nucleotide sequence ID" value="NM_001289534.1"/>
</dbReference>
<dbReference type="RefSeq" id="NP_001276466.1">
    <molecule id="Q9D5T7-2"/>
    <property type="nucleotide sequence ID" value="NM_001289537.1"/>
</dbReference>
<dbReference type="RefSeq" id="NP_001360815.1">
    <molecule id="Q9D5T7-1"/>
    <property type="nucleotide sequence ID" value="NM_001373886.1"/>
</dbReference>
<dbReference type="RefSeq" id="NP_080765.1">
    <molecule id="Q9D5T7-2"/>
    <property type="nucleotide sequence ID" value="NM_026489.3"/>
</dbReference>
<dbReference type="SMR" id="Q9D5T7"/>
<dbReference type="BioGRID" id="212580">
    <property type="interactions" value="1"/>
</dbReference>
<dbReference type="FunCoup" id="Q9D5T7">
    <property type="interactions" value="481"/>
</dbReference>
<dbReference type="IntAct" id="Q9D5T7">
    <property type="interactions" value="1"/>
</dbReference>
<dbReference type="STRING" id="10090.ENSMUSP00000029754"/>
<dbReference type="iPTMnet" id="Q9D5T7"/>
<dbReference type="PhosphoSitePlus" id="Q9D5T7"/>
<dbReference type="SwissPalm" id="Q9D5T7"/>
<dbReference type="PaxDb" id="10090-ENSMUSP00000029754"/>
<dbReference type="ProteomicsDB" id="273163">
    <molecule id="Q9D5T7-1"/>
</dbReference>
<dbReference type="ProteomicsDB" id="273164">
    <molecule id="Q9D5T7-2"/>
</dbReference>
<dbReference type="Antibodypedia" id="34037">
    <property type="antibodies" value="190 antibodies from 25 providers"/>
</dbReference>
<dbReference type="Ensembl" id="ENSMUST00000029754.13">
    <molecule id="Q9D5T7-1"/>
    <property type="protein sequence ID" value="ENSMUSP00000029754.7"/>
    <property type="gene ID" value="ENSMUSG00000028109.15"/>
</dbReference>
<dbReference type="Ensembl" id="ENSMUST00000090797.11">
    <molecule id="Q9D5T7-2"/>
    <property type="protein sequence ID" value="ENSMUSP00000088303.5"/>
    <property type="gene ID" value="ENSMUSG00000028109.15"/>
</dbReference>
<dbReference type="Ensembl" id="ENSMUST00000107154.4">
    <molecule id="Q9D5T7-2"/>
    <property type="protein sequence ID" value="ENSMUSP00000102772.2"/>
    <property type="gene ID" value="ENSMUSG00000028109.15"/>
</dbReference>
<dbReference type="Ensembl" id="ENSMUST00000171191.6">
    <molecule id="Q9D5T7-2"/>
    <property type="protein sequence ID" value="ENSMUSP00000127180.2"/>
    <property type="gene ID" value="ENSMUSG00000028109.15"/>
</dbReference>
<dbReference type="GeneID" id="67981"/>
<dbReference type="KEGG" id="mmu:67981"/>
<dbReference type="UCSC" id="uc008qkb.2">
    <molecule id="Q9D5T7-2"/>
    <property type="organism name" value="mouse"/>
</dbReference>
<dbReference type="UCSC" id="uc008qkd.2">
    <molecule id="Q9D5T7-1"/>
    <property type="organism name" value="mouse"/>
</dbReference>
<dbReference type="AGR" id="MGI:1915231"/>
<dbReference type="CTD" id="84072"/>
<dbReference type="MGI" id="MGI:1915231">
    <property type="gene designation" value="Hormad1"/>
</dbReference>
<dbReference type="VEuPathDB" id="HostDB:ENSMUSG00000028109"/>
<dbReference type="eggNOG" id="KOG4652">
    <property type="taxonomic scope" value="Eukaryota"/>
</dbReference>
<dbReference type="GeneTree" id="ENSGT00390000018130"/>
<dbReference type="HOGENOM" id="CLU_058638_1_0_1"/>
<dbReference type="InParanoid" id="Q9D5T7"/>
<dbReference type="OMA" id="IFQNKMV"/>
<dbReference type="OrthoDB" id="1928087at2759"/>
<dbReference type="PhylomeDB" id="Q9D5T7"/>
<dbReference type="TreeFam" id="TF313989"/>
<dbReference type="BioGRID-ORCS" id="67981">
    <property type="hits" value="0 hits in 77 CRISPR screens"/>
</dbReference>
<dbReference type="ChiTaRS" id="Hormad1">
    <property type="organism name" value="mouse"/>
</dbReference>
<dbReference type="PRO" id="PR:Q9D5T7"/>
<dbReference type="Proteomes" id="UP000000589">
    <property type="component" value="Chromosome 3"/>
</dbReference>
<dbReference type="RNAct" id="Q9D5T7">
    <property type="molecule type" value="protein"/>
</dbReference>
<dbReference type="Bgee" id="ENSMUSG00000028109">
    <property type="expression patterns" value="Expressed in spermatocyte and 17 other cell types or tissues"/>
</dbReference>
<dbReference type="GO" id="GO:0005694">
    <property type="term" value="C:chromosome"/>
    <property type="evidence" value="ECO:0000314"/>
    <property type="project" value="UniProtKB"/>
</dbReference>
<dbReference type="GO" id="GO:0000794">
    <property type="term" value="C:condensed nuclear chromosome"/>
    <property type="evidence" value="ECO:0000314"/>
    <property type="project" value="MGI"/>
</dbReference>
<dbReference type="GO" id="GO:0005737">
    <property type="term" value="C:cytoplasm"/>
    <property type="evidence" value="ECO:0000314"/>
    <property type="project" value="UniProtKB"/>
</dbReference>
<dbReference type="GO" id="GO:0005634">
    <property type="term" value="C:nucleus"/>
    <property type="evidence" value="ECO:0000314"/>
    <property type="project" value="UniProtKB"/>
</dbReference>
<dbReference type="GO" id="GO:0000795">
    <property type="term" value="C:synaptonemal complex"/>
    <property type="evidence" value="ECO:0000314"/>
    <property type="project" value="MGI"/>
</dbReference>
<dbReference type="GO" id="GO:0001824">
    <property type="term" value="P:blastocyst development"/>
    <property type="evidence" value="ECO:0000315"/>
    <property type="project" value="UniProtKB"/>
</dbReference>
<dbReference type="GO" id="GO:0007129">
    <property type="term" value="P:homologous chromosome pairing at meiosis"/>
    <property type="evidence" value="ECO:0000315"/>
    <property type="project" value="MGI"/>
</dbReference>
<dbReference type="GO" id="GO:0051321">
    <property type="term" value="P:meiotic cell cycle"/>
    <property type="evidence" value="ECO:0000270"/>
    <property type="project" value="UniProtKB"/>
</dbReference>
<dbReference type="GO" id="GO:0042138">
    <property type="term" value="P:meiotic DNA double-strand break formation"/>
    <property type="evidence" value="ECO:0000315"/>
    <property type="project" value="UniProtKB"/>
</dbReference>
<dbReference type="GO" id="GO:0051598">
    <property type="term" value="P:meiotic recombination checkpoint signaling"/>
    <property type="evidence" value="ECO:0000315"/>
    <property type="project" value="UniProtKB"/>
</dbReference>
<dbReference type="GO" id="GO:0051177">
    <property type="term" value="P:meiotic sister chromatid cohesion"/>
    <property type="evidence" value="ECO:0000315"/>
    <property type="project" value="UniProtKB"/>
</dbReference>
<dbReference type="GO" id="GO:0048477">
    <property type="term" value="P:oogenesis"/>
    <property type="evidence" value="ECO:0000315"/>
    <property type="project" value="UniProtKB"/>
</dbReference>
<dbReference type="GO" id="GO:0060629">
    <property type="term" value="P:regulation of homologous chromosome segregation"/>
    <property type="evidence" value="ECO:0000315"/>
    <property type="project" value="UniProtKB"/>
</dbReference>
<dbReference type="GO" id="GO:0007283">
    <property type="term" value="P:spermatogenesis"/>
    <property type="evidence" value="ECO:0000315"/>
    <property type="project" value="UniProtKB"/>
</dbReference>
<dbReference type="GO" id="GO:0007130">
    <property type="term" value="P:synaptonemal complex assembly"/>
    <property type="evidence" value="ECO:0000315"/>
    <property type="project" value="UniProtKB"/>
</dbReference>
<dbReference type="FunFam" id="3.30.900.10:FF:000006">
    <property type="entry name" value="HORMA domain-containing protein 1"/>
    <property type="match status" value="1"/>
</dbReference>
<dbReference type="Gene3D" id="3.30.900.10">
    <property type="entry name" value="HORMA domain"/>
    <property type="match status" value="1"/>
</dbReference>
<dbReference type="InterPro" id="IPR003511">
    <property type="entry name" value="HORMA_dom"/>
</dbReference>
<dbReference type="InterPro" id="IPR036570">
    <property type="entry name" value="HORMA_dom_sf"/>
</dbReference>
<dbReference type="InterPro" id="IPR051294">
    <property type="entry name" value="HORMA_MeioticProgression"/>
</dbReference>
<dbReference type="PANTHER" id="PTHR48225">
    <property type="entry name" value="HORMA DOMAIN-CONTAINING PROTEIN 1"/>
    <property type="match status" value="1"/>
</dbReference>
<dbReference type="PANTHER" id="PTHR48225:SF1">
    <property type="entry name" value="HORMA DOMAIN-CONTAINING PROTEIN 1"/>
    <property type="match status" value="1"/>
</dbReference>
<dbReference type="Pfam" id="PF02301">
    <property type="entry name" value="HORMA"/>
    <property type="match status" value="1"/>
</dbReference>
<dbReference type="SUPFAM" id="SSF56019">
    <property type="entry name" value="The spindle assembly checkpoint protein mad2"/>
    <property type="match status" value="1"/>
</dbReference>
<dbReference type="PROSITE" id="PS50815">
    <property type="entry name" value="HORMA"/>
    <property type="match status" value="1"/>
</dbReference>
<comment type="function">
    <text evidence="4 6 7">Plays a key role in meiotic progression (PubMed:19686734, PubMed:21079677, PubMed:21478856). Regulates 3 different functions during meiosis: ensures that sufficient numbers of processed DNA double-strand breaks (DSBs) are available for successful homology search by increasing the steady-state numbers of single-stranded DSB ends (PubMed:19686734, PubMed:21079677). Promotes synaptonemal-complex formation independently of its role in homology search (PubMed:19686734, PubMed:21079677). Plays a key role in the male mid-pachytene checkpoint and the female meiotic prophase checkpoint: required for efficient build-up of ATR activity on unsynapsed chromosome regions, a process believed to form the basis of meiotic silencing of unsynapsed chromatin (MSUC) and meiotic prophase quality control in both sexes (PubMed:21478856).</text>
</comment>
<comment type="subunit">
    <text evidence="9 10">Interacts with HORMAD2 (PubMed:22549958). Interacts with IHO1 (PubMed:27723721).</text>
</comment>
<comment type="subcellular location">
    <molecule>Isoform 1</molecule>
    <subcellularLocation>
        <location evidence="4 5">Nucleus</location>
    </subcellularLocation>
    <subcellularLocation>
        <location evidence="4 5 8 9 10 11 12">Chromosome</location>
    </subcellularLocation>
    <text evidence="4 5 8 10">Preferentially localizes to unsynapsed or desynapsed chromosomal regions during the prophase I stage of meiosis (PubMed:19686734, PubMed:19851446, PubMed:27723721). Accumulates on the chromosomes during the leptotene to zygotene stages of meiotic prophase I (PubMed:19686734, PubMed:19851446, PubMed:27723721). As germ cells progress into the pachytene stage, disappears from the synapsed chromosomal regions (PubMed:19686734, PubMed:19851446, PubMed:27723721). Once the chromosomes desynapse during the diplotene stage, it again accumulates on the chromosome axis of the desynapsed homologs (PubMed:19686734, PubMed:19851446, PubMed:27723721). TRIP13 is required for depletion from synapsed chromosomes (PubMed:19851446). The expression of the phosphorylated form at Ser-375 is restricted to unsynapsed chromosomal regions (PubMed:22346761).</text>
</comment>
<comment type="subcellular location">
    <molecule>Isoform 2</molecule>
    <subcellularLocation>
        <location evidence="4">Cytoplasm</location>
    </subcellularLocation>
</comment>
<comment type="alternative products">
    <event type="alternative splicing"/>
    <isoform>
        <id>Q9D5T7-1</id>
        <name>1</name>
        <name>HORMAD1L</name>
        <sequence type="displayed"/>
    </isoform>
    <isoform>
        <id>Q9D5T7-2</id>
        <name>2</name>
        <name>HORMAD1S</name>
        <sequence type="described" ref="VSP_024604"/>
    </isoform>
</comment>
<comment type="tissue specificity">
    <text evidence="3 4 5 6">Specifically expressed in meiotic germ cells.</text>
</comment>
<comment type="developmental stage">
    <text evidence="3 4 6">Expressed in spermatocytes from P10 to adulthood. Expressed in oocytes from 12.5 dpc to P9. Primarily detected in spermatocytes and less in spermatids or spermatogonia. Abundant in the nuclei of pachytene and zygotene cells. Also detected in nuclei of diplotene cells (at protein level).</text>
</comment>
<comment type="PTM">
    <text evidence="4 8">Phosphorylated at Ser-375 in a SPO11-dependent manner.</text>
</comment>
<comment type="disruption phenotype">
    <text evidence="6 7">Mice develop normally without obvious somatic defects but males and females are sterile. Although spermatocytes are present in testis tubules at epithelial cycle stage III-IV, they undergo apoptosis by the end of stage IV, and post-meiotic cells are not found in testes, suggesting that spermatocytes are eliminated at a stage equivalent to mid-pachytene. In females, ovarian development is grossly normal, eggs fertilize and embryonic development arrests at blastocyst stage due to aneuploidy.</text>
</comment>
<accession>Q9D5T7</accession>
<accession>Q9CUF3</accession>
<accession>Q9D473</accession>